<reference key="1">
    <citation type="submission" date="1999-05" db="EMBL/GenBank/DDBJ databases">
        <authorList>
            <person name="Inoue H."/>
        </authorList>
    </citation>
    <scope>NUCLEOTIDE SEQUENCE [MRNA] (ISOFORMS 1 AND 2)</scope>
    <source>
        <strain>C57BL/6J</strain>
        <tissue>Ovary</tissue>
    </source>
</reference>
<reference key="2">
    <citation type="journal article" date="2005" name="Science">
        <title>The transcriptional landscape of the mammalian genome.</title>
        <authorList>
            <person name="Carninci P."/>
            <person name="Kasukawa T."/>
            <person name="Katayama S."/>
            <person name="Gough J."/>
            <person name="Frith M.C."/>
            <person name="Maeda N."/>
            <person name="Oyama R."/>
            <person name="Ravasi T."/>
            <person name="Lenhard B."/>
            <person name="Wells C."/>
            <person name="Kodzius R."/>
            <person name="Shimokawa K."/>
            <person name="Bajic V.B."/>
            <person name="Brenner S.E."/>
            <person name="Batalov S."/>
            <person name="Forrest A.R."/>
            <person name="Zavolan M."/>
            <person name="Davis M.J."/>
            <person name="Wilming L.G."/>
            <person name="Aidinis V."/>
            <person name="Allen J.E."/>
            <person name="Ambesi-Impiombato A."/>
            <person name="Apweiler R."/>
            <person name="Aturaliya R.N."/>
            <person name="Bailey T.L."/>
            <person name="Bansal M."/>
            <person name="Baxter L."/>
            <person name="Beisel K.W."/>
            <person name="Bersano T."/>
            <person name="Bono H."/>
            <person name="Chalk A.M."/>
            <person name="Chiu K.P."/>
            <person name="Choudhary V."/>
            <person name="Christoffels A."/>
            <person name="Clutterbuck D.R."/>
            <person name="Crowe M.L."/>
            <person name="Dalla E."/>
            <person name="Dalrymple B.P."/>
            <person name="de Bono B."/>
            <person name="Della Gatta G."/>
            <person name="di Bernardo D."/>
            <person name="Down T."/>
            <person name="Engstrom P."/>
            <person name="Fagiolini M."/>
            <person name="Faulkner G."/>
            <person name="Fletcher C.F."/>
            <person name="Fukushima T."/>
            <person name="Furuno M."/>
            <person name="Futaki S."/>
            <person name="Gariboldi M."/>
            <person name="Georgii-Hemming P."/>
            <person name="Gingeras T.R."/>
            <person name="Gojobori T."/>
            <person name="Green R.E."/>
            <person name="Gustincich S."/>
            <person name="Harbers M."/>
            <person name="Hayashi Y."/>
            <person name="Hensch T.K."/>
            <person name="Hirokawa N."/>
            <person name="Hill D."/>
            <person name="Huminiecki L."/>
            <person name="Iacono M."/>
            <person name="Ikeo K."/>
            <person name="Iwama A."/>
            <person name="Ishikawa T."/>
            <person name="Jakt M."/>
            <person name="Kanapin A."/>
            <person name="Katoh M."/>
            <person name="Kawasawa Y."/>
            <person name="Kelso J."/>
            <person name="Kitamura H."/>
            <person name="Kitano H."/>
            <person name="Kollias G."/>
            <person name="Krishnan S.P."/>
            <person name="Kruger A."/>
            <person name="Kummerfeld S.K."/>
            <person name="Kurochkin I.V."/>
            <person name="Lareau L.F."/>
            <person name="Lazarevic D."/>
            <person name="Lipovich L."/>
            <person name="Liu J."/>
            <person name="Liuni S."/>
            <person name="McWilliam S."/>
            <person name="Madan Babu M."/>
            <person name="Madera M."/>
            <person name="Marchionni L."/>
            <person name="Matsuda H."/>
            <person name="Matsuzawa S."/>
            <person name="Miki H."/>
            <person name="Mignone F."/>
            <person name="Miyake S."/>
            <person name="Morris K."/>
            <person name="Mottagui-Tabar S."/>
            <person name="Mulder N."/>
            <person name="Nakano N."/>
            <person name="Nakauchi H."/>
            <person name="Ng P."/>
            <person name="Nilsson R."/>
            <person name="Nishiguchi S."/>
            <person name="Nishikawa S."/>
            <person name="Nori F."/>
            <person name="Ohara O."/>
            <person name="Okazaki Y."/>
            <person name="Orlando V."/>
            <person name="Pang K.C."/>
            <person name="Pavan W.J."/>
            <person name="Pavesi G."/>
            <person name="Pesole G."/>
            <person name="Petrovsky N."/>
            <person name="Piazza S."/>
            <person name="Reed J."/>
            <person name="Reid J.F."/>
            <person name="Ring B.Z."/>
            <person name="Ringwald M."/>
            <person name="Rost B."/>
            <person name="Ruan Y."/>
            <person name="Salzberg S.L."/>
            <person name="Sandelin A."/>
            <person name="Schneider C."/>
            <person name="Schoenbach C."/>
            <person name="Sekiguchi K."/>
            <person name="Semple C.A."/>
            <person name="Seno S."/>
            <person name="Sessa L."/>
            <person name="Sheng Y."/>
            <person name="Shibata Y."/>
            <person name="Shimada H."/>
            <person name="Shimada K."/>
            <person name="Silva D."/>
            <person name="Sinclair B."/>
            <person name="Sperling S."/>
            <person name="Stupka E."/>
            <person name="Sugiura K."/>
            <person name="Sultana R."/>
            <person name="Takenaka Y."/>
            <person name="Taki K."/>
            <person name="Tammoja K."/>
            <person name="Tan S.L."/>
            <person name="Tang S."/>
            <person name="Taylor M.S."/>
            <person name="Tegner J."/>
            <person name="Teichmann S.A."/>
            <person name="Ueda H.R."/>
            <person name="van Nimwegen E."/>
            <person name="Verardo R."/>
            <person name="Wei C.L."/>
            <person name="Yagi K."/>
            <person name="Yamanishi H."/>
            <person name="Zabarovsky E."/>
            <person name="Zhu S."/>
            <person name="Zimmer A."/>
            <person name="Hide W."/>
            <person name="Bult C."/>
            <person name="Grimmond S.M."/>
            <person name="Teasdale R.D."/>
            <person name="Liu E.T."/>
            <person name="Brusic V."/>
            <person name="Quackenbush J."/>
            <person name="Wahlestedt C."/>
            <person name="Mattick J.S."/>
            <person name="Hume D.A."/>
            <person name="Kai C."/>
            <person name="Sasaki D."/>
            <person name="Tomaru Y."/>
            <person name="Fukuda S."/>
            <person name="Kanamori-Katayama M."/>
            <person name="Suzuki M."/>
            <person name="Aoki J."/>
            <person name="Arakawa T."/>
            <person name="Iida J."/>
            <person name="Imamura K."/>
            <person name="Itoh M."/>
            <person name="Kato T."/>
            <person name="Kawaji H."/>
            <person name="Kawagashira N."/>
            <person name="Kawashima T."/>
            <person name="Kojima M."/>
            <person name="Kondo S."/>
            <person name="Konno H."/>
            <person name="Nakano K."/>
            <person name="Ninomiya N."/>
            <person name="Nishio T."/>
            <person name="Okada M."/>
            <person name="Plessy C."/>
            <person name="Shibata K."/>
            <person name="Shiraki T."/>
            <person name="Suzuki S."/>
            <person name="Tagami M."/>
            <person name="Waki K."/>
            <person name="Watahiki A."/>
            <person name="Okamura-Oho Y."/>
            <person name="Suzuki H."/>
            <person name="Kawai J."/>
            <person name="Hayashizaki Y."/>
        </authorList>
    </citation>
    <scope>NUCLEOTIDE SEQUENCE [LARGE SCALE MRNA] (ISOFORM 1)</scope>
    <source>
        <strain>C57BL/6J</strain>
        <tissue>Embryo</tissue>
    </source>
</reference>
<reference key="3">
    <citation type="journal article" date="2009" name="PLoS Biol.">
        <title>Lineage-specific biology revealed by a finished genome assembly of the mouse.</title>
        <authorList>
            <person name="Church D.M."/>
            <person name="Goodstadt L."/>
            <person name="Hillier L.W."/>
            <person name="Zody M.C."/>
            <person name="Goldstein S."/>
            <person name="She X."/>
            <person name="Bult C.J."/>
            <person name="Agarwala R."/>
            <person name="Cherry J.L."/>
            <person name="DiCuccio M."/>
            <person name="Hlavina W."/>
            <person name="Kapustin Y."/>
            <person name="Meric P."/>
            <person name="Maglott D."/>
            <person name="Birtle Z."/>
            <person name="Marques A.C."/>
            <person name="Graves T."/>
            <person name="Zhou S."/>
            <person name="Teague B."/>
            <person name="Potamousis K."/>
            <person name="Churas C."/>
            <person name="Place M."/>
            <person name="Herschleb J."/>
            <person name="Runnheim R."/>
            <person name="Forrest D."/>
            <person name="Amos-Landgraf J."/>
            <person name="Schwartz D.C."/>
            <person name="Cheng Z."/>
            <person name="Lindblad-Toh K."/>
            <person name="Eichler E.E."/>
            <person name="Ponting C.P."/>
        </authorList>
    </citation>
    <scope>NUCLEOTIDE SEQUENCE [LARGE SCALE GENOMIC DNA]</scope>
    <source>
        <strain>C57BL/6J</strain>
    </source>
</reference>
<reference key="4">
    <citation type="journal article" date="2004" name="Genome Res.">
        <title>The status, quality, and expansion of the NIH full-length cDNA project: the Mammalian Gene Collection (MGC).</title>
        <authorList>
            <consortium name="The MGC Project Team"/>
        </authorList>
    </citation>
    <scope>NUCLEOTIDE SEQUENCE [LARGE SCALE MRNA] (ISOFORM 1)</scope>
    <source>
        <strain>FVB/N</strain>
        <tissue>Mammary tumor</tissue>
    </source>
</reference>
<evidence type="ECO:0000250" key="1">
    <source>
        <dbReference type="UniProtKB" id="P78539"/>
    </source>
</evidence>
<evidence type="ECO:0000255" key="2"/>
<evidence type="ECO:0000255" key="3">
    <source>
        <dbReference type="PROSITE-ProRule" id="PRU00113"/>
    </source>
</evidence>
<evidence type="ECO:0000255" key="4">
    <source>
        <dbReference type="PROSITE-ProRule" id="PRU00302"/>
    </source>
</evidence>
<evidence type="ECO:0000303" key="5">
    <source ref="1"/>
</evidence>
<feature type="signal peptide" evidence="2">
    <location>
        <begin position="1"/>
        <end position="30"/>
    </location>
</feature>
<feature type="chain" id="PRO_0000022417" description="Sushi-repeat-containing protein SRPX">
    <location>
        <begin position="31"/>
        <end position="464"/>
    </location>
</feature>
<feature type="domain" description="Sushi 1" evidence="4">
    <location>
        <begin position="57"/>
        <end position="117"/>
    </location>
</feature>
<feature type="domain" description="Sushi 2" evidence="4">
    <location>
        <begin position="118"/>
        <end position="176"/>
    </location>
</feature>
<feature type="domain" description="HYR" evidence="3">
    <location>
        <begin position="177"/>
        <end position="259"/>
    </location>
</feature>
<feature type="domain" description="Sushi 3" evidence="4">
    <location>
        <begin position="260"/>
        <end position="319"/>
    </location>
</feature>
<feature type="glycosylation site" description="O-linked (Xyl...) (chondroitin sulfate) serine" evidence="1">
    <location>
        <position position="34"/>
    </location>
</feature>
<feature type="disulfide bond" evidence="4">
    <location>
        <begin position="57"/>
        <end position="85"/>
    </location>
</feature>
<feature type="disulfide bond" evidence="4">
    <location>
        <begin position="69"/>
        <end position="103"/>
    </location>
</feature>
<feature type="disulfide bond" evidence="4">
    <location>
        <begin position="89"/>
        <end position="115"/>
    </location>
</feature>
<feature type="disulfide bond" evidence="4">
    <location>
        <begin position="120"/>
        <end position="161"/>
    </location>
</feature>
<feature type="disulfide bond" evidence="4">
    <location>
        <begin position="147"/>
        <end position="174"/>
    </location>
</feature>
<feature type="disulfide bond" evidence="4">
    <location>
        <begin position="262"/>
        <end position="304"/>
    </location>
</feature>
<feature type="disulfide bond" evidence="4">
    <location>
        <begin position="290"/>
        <end position="317"/>
    </location>
</feature>
<feature type="splice variant" id="VSP_014016" description="In isoform 2." evidence="5">
    <original>GSGDSPLEDDGVWYSHSLYKDTPWCSPIKVKYGDVYCRAPPGGYYKTALGTRCDIRCRKGYELHGSSQLICQSNKRWSDKVICKQ</original>
    <variation>E</variation>
    <location>
        <begin position="33"/>
        <end position="117"/>
    </location>
</feature>
<sequence length="464" mass="51574">MGSPGLRPELLLPQVLPLLLALLHVLPSQGFPGSGDSPLEDDGVWYSHSLYKDTPWCSPIKVKYGDVYCRAPPGGYYKTALGTRCDIRCRKGYELHGSSQLICQSNKRWSDKVICKQKRCPTLTMPANGGFKCVDGAYFNSRCEYYCSPGYTLKGERTVTCMDNKAWSGRPASCVDLEPPRIKCPSVKERIAEPNKLTVRVSWESPEGRDTADGILTDVILKGLPPGSNFPEGDHKIEYTVYDRAENKGTCKFRVKVRVRRCGKLNAPENGYMKCSSDGDNYGATCEFSCIGGYELQGSPARVCQSNLAWSGTEPSCAAMNVNVGVRTAAALLDQFYEKRRLLIVSTPTARNLLYRLQLGMLQQAQCGLDLRHVTVVELVGVFPTLIGRIRAKIMPPALALQLRLLLRIPLYSFSMVVVDKHGMDKERYVSLVTPMALFNLIDTFPLRKEEMILQAEMGQTCNV</sequence>
<proteinExistence type="evidence at transcript level"/>
<comment type="alternative products">
    <event type="alternative splicing"/>
    <isoform>
        <id>Q9R0M3-1</id>
        <name>1</name>
        <name>Drs-1</name>
        <sequence type="displayed"/>
    </isoform>
    <isoform>
        <id>Q9R0M3-2</id>
        <name>2</name>
        <name>Drs-2</name>
        <sequence type="described" ref="VSP_014016"/>
    </isoform>
</comment>
<organism>
    <name type="scientific">Mus musculus</name>
    <name type="common">Mouse</name>
    <dbReference type="NCBI Taxonomy" id="10090"/>
    <lineage>
        <taxon>Eukaryota</taxon>
        <taxon>Metazoa</taxon>
        <taxon>Chordata</taxon>
        <taxon>Craniata</taxon>
        <taxon>Vertebrata</taxon>
        <taxon>Euteleostomi</taxon>
        <taxon>Mammalia</taxon>
        <taxon>Eutheria</taxon>
        <taxon>Euarchontoglires</taxon>
        <taxon>Glires</taxon>
        <taxon>Rodentia</taxon>
        <taxon>Myomorpha</taxon>
        <taxon>Muroidea</taxon>
        <taxon>Muridae</taxon>
        <taxon>Murinae</taxon>
        <taxon>Mus</taxon>
        <taxon>Mus</taxon>
    </lineage>
</organism>
<keyword id="KW-0025">Alternative splicing</keyword>
<keyword id="KW-1015">Disulfide bond</keyword>
<keyword id="KW-0325">Glycoprotein</keyword>
<keyword id="KW-0654">Proteoglycan</keyword>
<keyword id="KW-1185">Reference proteome</keyword>
<keyword id="KW-0677">Repeat</keyword>
<keyword id="KW-0732">Signal</keyword>
<keyword id="KW-0768">Sushi</keyword>
<gene>
    <name type="primary">Srpx</name>
</gene>
<protein>
    <recommendedName>
        <fullName>Sushi-repeat-containing protein SRPX</fullName>
    </recommendedName>
    <alternativeName>
        <fullName>DRS protein</fullName>
    </alternativeName>
</protein>
<dbReference type="EMBL" id="AB028049">
    <property type="protein sequence ID" value="BAA87328.1"/>
    <property type="molecule type" value="mRNA"/>
</dbReference>
<dbReference type="EMBL" id="AB028050">
    <property type="protein sequence ID" value="BAA87329.1"/>
    <property type="molecule type" value="mRNA"/>
</dbReference>
<dbReference type="EMBL" id="AK034696">
    <property type="protein sequence ID" value="BAC28800.1"/>
    <property type="molecule type" value="mRNA"/>
</dbReference>
<dbReference type="EMBL" id="BX005236">
    <property type="status" value="NOT_ANNOTATED_CDS"/>
    <property type="molecule type" value="Genomic_DNA"/>
</dbReference>
<dbReference type="EMBL" id="BC022572">
    <property type="protein sequence ID" value="AAH22572.1"/>
    <property type="molecule type" value="mRNA"/>
</dbReference>
<dbReference type="CCDS" id="CCDS30013.1">
    <molecule id="Q9R0M3-1"/>
</dbReference>
<dbReference type="CCDS" id="CCDS90696.1">
    <molecule id="Q9R0M3-2"/>
</dbReference>
<dbReference type="RefSeq" id="NP_001352016.1">
    <molecule id="Q9R0M3-2"/>
    <property type="nucleotide sequence ID" value="NM_001365087.1"/>
</dbReference>
<dbReference type="RefSeq" id="NP_058607.1">
    <molecule id="Q9R0M3-1"/>
    <property type="nucleotide sequence ID" value="NM_016911.5"/>
</dbReference>
<dbReference type="SMR" id="Q9R0M3"/>
<dbReference type="FunCoup" id="Q9R0M3">
    <property type="interactions" value="718"/>
</dbReference>
<dbReference type="STRING" id="10090.ENSMUSP00000047926"/>
<dbReference type="GlyGen" id="Q9R0M3">
    <property type="glycosylation" value="1 site"/>
</dbReference>
<dbReference type="PhosphoSitePlus" id="Q9R0M3"/>
<dbReference type="jPOST" id="Q9R0M3"/>
<dbReference type="PaxDb" id="10090-ENSMUSP00000047926"/>
<dbReference type="ProteomicsDB" id="263348">
    <molecule id="Q9R0M3-1"/>
</dbReference>
<dbReference type="ProteomicsDB" id="263349">
    <molecule id="Q9R0M3-2"/>
</dbReference>
<dbReference type="Antibodypedia" id="640">
    <property type="antibodies" value="227 antibodies from 28 providers"/>
</dbReference>
<dbReference type="DNASU" id="51795"/>
<dbReference type="Ensembl" id="ENSMUST00000044789.10">
    <molecule id="Q9R0M3-1"/>
    <property type="protein sequence ID" value="ENSMUSP00000047926.4"/>
    <property type="gene ID" value="ENSMUSG00000090084.8"/>
</dbReference>
<dbReference type="Ensembl" id="ENSMUST00000115543.3">
    <molecule id="Q9R0M3-2"/>
    <property type="protein sequence ID" value="ENSMUSP00000111205.3"/>
    <property type="gene ID" value="ENSMUSG00000090084.8"/>
</dbReference>
<dbReference type="GeneID" id="51795"/>
<dbReference type="KEGG" id="mmu:51795"/>
<dbReference type="UCSC" id="uc009sqc.1">
    <molecule id="Q9R0M3-1"/>
    <property type="organism name" value="mouse"/>
</dbReference>
<dbReference type="UCSC" id="uc012het.1">
    <molecule id="Q9R0M3-2"/>
    <property type="organism name" value="mouse"/>
</dbReference>
<dbReference type="AGR" id="MGI:1858306"/>
<dbReference type="CTD" id="8406"/>
<dbReference type="MGI" id="MGI:1858306">
    <property type="gene designation" value="Srpx"/>
</dbReference>
<dbReference type="VEuPathDB" id="HostDB:ENSMUSG00000090084"/>
<dbReference type="eggNOG" id="ENOG502QVU2">
    <property type="taxonomic scope" value="Eukaryota"/>
</dbReference>
<dbReference type="GeneTree" id="ENSGT00940000160302"/>
<dbReference type="HOGENOM" id="CLU_047011_0_0_1"/>
<dbReference type="InParanoid" id="Q9R0M3"/>
<dbReference type="OMA" id="RIQYTVY"/>
<dbReference type="OrthoDB" id="27557at9989"/>
<dbReference type="PhylomeDB" id="Q9R0M3"/>
<dbReference type="TreeFam" id="TF336515"/>
<dbReference type="BioGRID-ORCS" id="51795">
    <property type="hits" value="4 hits in 77 CRISPR screens"/>
</dbReference>
<dbReference type="ChiTaRS" id="Srpx">
    <property type="organism name" value="mouse"/>
</dbReference>
<dbReference type="PRO" id="PR:Q9R0M3"/>
<dbReference type="Proteomes" id="UP000000589">
    <property type="component" value="Chromosome X"/>
</dbReference>
<dbReference type="RNAct" id="Q9R0M3">
    <property type="molecule type" value="protein"/>
</dbReference>
<dbReference type="Bgee" id="ENSMUSG00000090084">
    <property type="expression patterns" value="Expressed in vault of skull and 122 other cell types or tissues"/>
</dbReference>
<dbReference type="ExpressionAtlas" id="Q9R0M3">
    <property type="expression patterns" value="baseline and differential"/>
</dbReference>
<dbReference type="GO" id="GO:0005776">
    <property type="term" value="C:autophagosome"/>
    <property type="evidence" value="ECO:0000314"/>
    <property type="project" value="MGI"/>
</dbReference>
<dbReference type="GO" id="GO:0005783">
    <property type="term" value="C:endoplasmic reticulum"/>
    <property type="evidence" value="ECO:0000314"/>
    <property type="project" value="MGI"/>
</dbReference>
<dbReference type="GO" id="GO:0006914">
    <property type="term" value="P:autophagy"/>
    <property type="evidence" value="ECO:0000315"/>
    <property type="project" value="MGI"/>
</dbReference>
<dbReference type="GO" id="GO:0060244">
    <property type="term" value="P:negative regulation of cell proliferation involved in contact inhibition"/>
    <property type="evidence" value="ECO:0000314"/>
    <property type="project" value="MGI"/>
</dbReference>
<dbReference type="GO" id="GO:0001845">
    <property type="term" value="P:phagolysosome assembly"/>
    <property type="evidence" value="ECO:0000315"/>
    <property type="project" value="MGI"/>
</dbReference>
<dbReference type="GO" id="GO:2001241">
    <property type="term" value="P:positive regulation of extrinsic apoptotic signaling pathway in absence of ligand"/>
    <property type="evidence" value="ECO:0000315"/>
    <property type="project" value="MGI"/>
</dbReference>
<dbReference type="GO" id="GO:0034976">
    <property type="term" value="P:response to endoplasmic reticulum stress"/>
    <property type="evidence" value="ECO:0000315"/>
    <property type="project" value="MGI"/>
</dbReference>
<dbReference type="CDD" id="cd00033">
    <property type="entry name" value="CCP"/>
    <property type="match status" value="3"/>
</dbReference>
<dbReference type="FunFam" id="2.10.70.10:FF:000024">
    <property type="entry name" value="Sushi repeat-containing protein SRPX"/>
    <property type="match status" value="1"/>
</dbReference>
<dbReference type="FunFam" id="2.10.70.10:FF:000032">
    <property type="entry name" value="sushi repeat-containing protein SRPX isoform X1"/>
    <property type="match status" value="1"/>
</dbReference>
<dbReference type="Gene3D" id="2.10.70.10">
    <property type="entry name" value="Complement Module, domain 1"/>
    <property type="match status" value="3"/>
</dbReference>
<dbReference type="InterPro" id="IPR025232">
    <property type="entry name" value="DUF4174"/>
</dbReference>
<dbReference type="InterPro" id="IPR003410">
    <property type="entry name" value="HYR_dom"/>
</dbReference>
<dbReference type="InterPro" id="IPR043555">
    <property type="entry name" value="SRPX-like"/>
</dbReference>
<dbReference type="InterPro" id="IPR035976">
    <property type="entry name" value="Sushi/SCR/CCP_sf"/>
</dbReference>
<dbReference type="InterPro" id="IPR000436">
    <property type="entry name" value="Sushi_SCR_CCP_dom"/>
</dbReference>
<dbReference type="PANTHER" id="PTHR46343">
    <property type="entry name" value="HYR DOMAIN-CONTAINING PROTEIN"/>
    <property type="match status" value="1"/>
</dbReference>
<dbReference type="PANTHER" id="PTHR46343:SF1">
    <property type="entry name" value="SUSHI REPEAT-CONTAINING PROTEIN SRPX"/>
    <property type="match status" value="1"/>
</dbReference>
<dbReference type="Pfam" id="PF13778">
    <property type="entry name" value="DUF4174"/>
    <property type="match status" value="1"/>
</dbReference>
<dbReference type="Pfam" id="PF02494">
    <property type="entry name" value="HYR"/>
    <property type="match status" value="1"/>
</dbReference>
<dbReference type="Pfam" id="PF00084">
    <property type="entry name" value="Sushi"/>
    <property type="match status" value="3"/>
</dbReference>
<dbReference type="SMART" id="SM00032">
    <property type="entry name" value="CCP"/>
    <property type="match status" value="3"/>
</dbReference>
<dbReference type="SUPFAM" id="SSF57535">
    <property type="entry name" value="Complement control module/SCR domain"/>
    <property type="match status" value="3"/>
</dbReference>
<dbReference type="PROSITE" id="PS50825">
    <property type="entry name" value="HYR"/>
    <property type="match status" value="1"/>
</dbReference>
<dbReference type="PROSITE" id="PS50923">
    <property type="entry name" value="SUSHI"/>
    <property type="match status" value="3"/>
</dbReference>
<name>SRPX_MOUSE</name>
<accession>Q9R0M3</accession>
<accession>A2BE46</accession>
<accession>A2BE47</accession>
<accession>Q9R0M2</accession>